<proteinExistence type="inferred from homology"/>
<reference key="1">
    <citation type="journal article" date="2006" name="J. Bacteriol.">
        <title>Complete genome sequence of Yersinia pestis strains Antiqua and Nepal516: evidence of gene reduction in an emerging pathogen.</title>
        <authorList>
            <person name="Chain P.S.G."/>
            <person name="Hu P."/>
            <person name="Malfatti S.A."/>
            <person name="Radnedge L."/>
            <person name="Larimer F."/>
            <person name="Vergez L.M."/>
            <person name="Worsham P."/>
            <person name="Chu M.C."/>
            <person name="Andersen G.L."/>
        </authorList>
    </citation>
    <scope>NUCLEOTIDE SEQUENCE [LARGE SCALE GENOMIC DNA]</scope>
    <source>
        <strain>Antiqua</strain>
    </source>
</reference>
<organism>
    <name type="scientific">Yersinia pestis bv. Antiqua (strain Antiqua)</name>
    <dbReference type="NCBI Taxonomy" id="360102"/>
    <lineage>
        <taxon>Bacteria</taxon>
        <taxon>Pseudomonadati</taxon>
        <taxon>Pseudomonadota</taxon>
        <taxon>Gammaproteobacteria</taxon>
        <taxon>Enterobacterales</taxon>
        <taxon>Yersiniaceae</taxon>
        <taxon>Yersinia</taxon>
    </lineage>
</organism>
<accession>Q1C741</accession>
<keyword id="KW-0046">Antibiotic resistance</keyword>
<keyword id="KW-0997">Cell inner membrane</keyword>
<keyword id="KW-1003">Cell membrane</keyword>
<keyword id="KW-0328">Glycosyltransferase</keyword>
<keyword id="KW-0441">Lipid A biosynthesis</keyword>
<keyword id="KW-0444">Lipid biosynthesis</keyword>
<keyword id="KW-0443">Lipid metabolism</keyword>
<keyword id="KW-0448">Lipopolysaccharide biosynthesis</keyword>
<keyword id="KW-0472">Membrane</keyword>
<keyword id="KW-0808">Transferase</keyword>
<keyword id="KW-0812">Transmembrane</keyword>
<keyword id="KW-1133">Transmembrane helix</keyword>
<protein>
    <recommendedName>
        <fullName evidence="1">Undecaprenyl-phosphate 4-deoxy-4-formamido-L-arabinose transferase</fullName>
        <ecNumber evidence="1">2.4.2.53</ecNumber>
    </recommendedName>
    <alternativeName>
        <fullName evidence="1">Undecaprenyl-phosphate Ara4FN transferase</fullName>
        <shortName evidence="1">Ara4FN transferase</shortName>
    </alternativeName>
</protein>
<evidence type="ECO:0000255" key="1">
    <source>
        <dbReference type="HAMAP-Rule" id="MF_01164"/>
    </source>
</evidence>
<dbReference type="EC" id="2.4.2.53" evidence="1"/>
<dbReference type="EMBL" id="CP000308">
    <property type="protein sequence ID" value="ABG13731.1"/>
    <property type="molecule type" value="Genomic_DNA"/>
</dbReference>
<dbReference type="RefSeq" id="WP_002211824.1">
    <property type="nucleotide sequence ID" value="NZ_CP009906.1"/>
</dbReference>
<dbReference type="SMR" id="Q1C741"/>
<dbReference type="CAZy" id="GT2">
    <property type="family name" value="Glycosyltransferase Family 2"/>
</dbReference>
<dbReference type="GeneID" id="57976256"/>
<dbReference type="KEGG" id="ypa:YPA_1765"/>
<dbReference type="UniPathway" id="UPA00030"/>
<dbReference type="UniPathway" id="UPA00036">
    <property type="reaction ID" value="UER00495"/>
</dbReference>
<dbReference type="Proteomes" id="UP000001971">
    <property type="component" value="Chromosome"/>
</dbReference>
<dbReference type="GO" id="GO:0005886">
    <property type="term" value="C:plasma membrane"/>
    <property type="evidence" value="ECO:0007669"/>
    <property type="project" value="UniProtKB-SubCell"/>
</dbReference>
<dbReference type="GO" id="GO:0016780">
    <property type="term" value="F:phosphotransferase activity, for other substituted phosphate groups"/>
    <property type="evidence" value="ECO:0007669"/>
    <property type="project" value="UniProtKB-UniRule"/>
</dbReference>
<dbReference type="GO" id="GO:0099621">
    <property type="term" value="F:undecaprenyl-phosphate 4-deoxy-4-formamido-L-arabinose transferase activity"/>
    <property type="evidence" value="ECO:0007669"/>
    <property type="project" value="UniProtKB-EC"/>
</dbReference>
<dbReference type="GO" id="GO:0036108">
    <property type="term" value="P:4-amino-4-deoxy-alpha-L-arabinopyranosyl undecaprenyl phosphate biosynthetic process"/>
    <property type="evidence" value="ECO:0007669"/>
    <property type="project" value="UniProtKB-UniRule"/>
</dbReference>
<dbReference type="GO" id="GO:0009245">
    <property type="term" value="P:lipid A biosynthetic process"/>
    <property type="evidence" value="ECO:0007669"/>
    <property type="project" value="UniProtKB-UniRule"/>
</dbReference>
<dbReference type="GO" id="GO:0009103">
    <property type="term" value="P:lipopolysaccharide biosynthetic process"/>
    <property type="evidence" value="ECO:0007669"/>
    <property type="project" value="UniProtKB-UniRule"/>
</dbReference>
<dbReference type="GO" id="GO:0046677">
    <property type="term" value="P:response to antibiotic"/>
    <property type="evidence" value="ECO:0007669"/>
    <property type="project" value="UniProtKB-KW"/>
</dbReference>
<dbReference type="CDD" id="cd04187">
    <property type="entry name" value="DPM1_like_bac"/>
    <property type="match status" value="1"/>
</dbReference>
<dbReference type="FunFam" id="3.90.550.10:FF:000019">
    <property type="entry name" value="Undecaprenyl-phosphate 4-deoxy-4-formamido-L-arabinose transferase"/>
    <property type="match status" value="1"/>
</dbReference>
<dbReference type="Gene3D" id="3.90.550.10">
    <property type="entry name" value="Spore Coat Polysaccharide Biosynthesis Protein SpsA, Chain A"/>
    <property type="match status" value="1"/>
</dbReference>
<dbReference type="HAMAP" id="MF_01164">
    <property type="entry name" value="ArnC_transfer"/>
    <property type="match status" value="1"/>
</dbReference>
<dbReference type="InterPro" id="IPR022857">
    <property type="entry name" value="ArnC_tfrase"/>
</dbReference>
<dbReference type="InterPro" id="IPR001173">
    <property type="entry name" value="Glyco_trans_2-like"/>
</dbReference>
<dbReference type="InterPro" id="IPR050256">
    <property type="entry name" value="Glycosyltransferase_2"/>
</dbReference>
<dbReference type="InterPro" id="IPR029044">
    <property type="entry name" value="Nucleotide-diphossugar_trans"/>
</dbReference>
<dbReference type="NCBIfam" id="NF007986">
    <property type="entry name" value="PRK10714.1"/>
    <property type="match status" value="1"/>
</dbReference>
<dbReference type="PANTHER" id="PTHR48090:SF3">
    <property type="entry name" value="UNDECAPRENYL-PHOSPHATE 4-DEOXY-4-FORMAMIDO-L-ARABINOSE TRANSFERASE"/>
    <property type="match status" value="1"/>
</dbReference>
<dbReference type="PANTHER" id="PTHR48090">
    <property type="entry name" value="UNDECAPRENYL-PHOSPHATE 4-DEOXY-4-FORMAMIDO-L-ARABINOSE TRANSFERASE-RELATED"/>
    <property type="match status" value="1"/>
</dbReference>
<dbReference type="Pfam" id="PF00535">
    <property type="entry name" value="Glycos_transf_2"/>
    <property type="match status" value="1"/>
</dbReference>
<dbReference type="SUPFAM" id="SSF53448">
    <property type="entry name" value="Nucleotide-diphospho-sugar transferases"/>
    <property type="match status" value="1"/>
</dbReference>
<gene>
    <name evidence="1" type="primary">arnC</name>
    <name type="ordered locus">YPA_1765</name>
</gene>
<comment type="function">
    <text evidence="1">Catalyzes the transfer of 4-deoxy-4-formamido-L-arabinose from UDP to undecaprenyl phosphate. The modified arabinose is attached to lipid A and is required for resistance to polymyxin and cationic antimicrobial peptides.</text>
</comment>
<comment type="catalytic activity">
    <reaction evidence="1">
        <text>UDP-4-deoxy-4-formamido-beta-L-arabinose + di-trans,octa-cis-undecaprenyl phosphate = 4-deoxy-4-formamido-alpha-L-arabinopyranosyl di-trans,octa-cis-undecaprenyl phosphate + UDP</text>
        <dbReference type="Rhea" id="RHEA:27722"/>
        <dbReference type="ChEBI" id="CHEBI:58223"/>
        <dbReference type="ChEBI" id="CHEBI:58709"/>
        <dbReference type="ChEBI" id="CHEBI:58909"/>
        <dbReference type="ChEBI" id="CHEBI:60392"/>
        <dbReference type="EC" id="2.4.2.53"/>
    </reaction>
</comment>
<comment type="pathway">
    <text evidence="1">Glycolipid biosynthesis; 4-amino-4-deoxy-alpha-L-arabinose undecaprenyl phosphate biosynthesis; 4-amino-4-deoxy-alpha-L-arabinose undecaprenyl phosphate from UDP-4-deoxy-4-formamido-beta-L-arabinose and undecaprenyl phosphate: step 1/2.</text>
</comment>
<comment type="pathway">
    <text evidence="1">Bacterial outer membrane biogenesis; lipopolysaccharide biosynthesis.</text>
</comment>
<comment type="subcellular location">
    <subcellularLocation>
        <location evidence="1">Cell inner membrane</location>
        <topology evidence="1">Multi-pass membrane protein</topology>
    </subcellularLocation>
</comment>
<comment type="similarity">
    <text evidence="1">Belongs to the glycosyltransferase 2 family.</text>
</comment>
<feature type="chain" id="PRO_1000065662" description="Undecaprenyl-phosphate 4-deoxy-4-formamido-L-arabinose transferase">
    <location>
        <begin position="1"/>
        <end position="327"/>
    </location>
</feature>
<feature type="transmembrane region" description="Helical" evidence="1">
    <location>
        <begin position="235"/>
        <end position="255"/>
    </location>
</feature>
<feature type="transmembrane region" description="Helical" evidence="1">
    <location>
        <begin position="270"/>
        <end position="290"/>
    </location>
</feature>
<name>ARNC_YERPA</name>
<sequence length="327" mass="36421">MSLNEPIKKVSIVIPVYNEQESLPALIDRTTAACKLLTQAYEIILVDDGSSDNSTELLTAAANDPDSHIIAILLNRNYGQHSAIMAGFNQVSGDLIITLDADLQNPPEETPRLVHVAEEGYDVVGTVRANRQDSLFRKTASRMINMMIQRATGKSMGDYGCMLRAYRRHIVEAMLHCHERSTFIPILANTFARRTTEITVHHAEREFGNSKYSLMRLINLMYDLITCLTTTPLRLLSLVGSAIALLGFTFSVLLVALRLIFGPEWAGGGVFTLFAVLFMFIGAQFVGMGLLGEYIGRIYNDVRARPRYFVQKVVGAEQTENNQDVEK</sequence>